<comment type="similarity">
    <text evidence="1">Belongs to the bacterial ribosomal protein bL27 family.</text>
</comment>
<keyword id="KW-1185">Reference proteome</keyword>
<keyword id="KW-0687">Ribonucleoprotein</keyword>
<keyword id="KW-0689">Ribosomal protein</keyword>
<proteinExistence type="inferred from homology"/>
<protein>
    <recommendedName>
        <fullName evidence="1">Large ribosomal subunit protein bL27</fullName>
    </recommendedName>
    <alternativeName>
        <fullName evidence="3">50S ribosomal protein L27</fullName>
    </alternativeName>
</protein>
<name>RL27_SHEFN</name>
<sequence length="84" mass="9076">MAHKKAGGSTRNGRDSESKRLGVKRFGGESVLAGNIIVRQRGTKFHAGVNVGIGRDHTLFALTDGKVKFQVKGPNNRKFISIEA</sequence>
<reference key="1">
    <citation type="submission" date="2006-08" db="EMBL/GenBank/DDBJ databases">
        <title>Complete sequence of Shewanella frigidimarina NCIMB 400.</title>
        <authorList>
            <consortium name="US DOE Joint Genome Institute"/>
            <person name="Copeland A."/>
            <person name="Lucas S."/>
            <person name="Lapidus A."/>
            <person name="Barry K."/>
            <person name="Detter J.C."/>
            <person name="Glavina del Rio T."/>
            <person name="Hammon N."/>
            <person name="Israni S."/>
            <person name="Dalin E."/>
            <person name="Tice H."/>
            <person name="Pitluck S."/>
            <person name="Fredrickson J.K."/>
            <person name="Kolker E."/>
            <person name="McCuel L.A."/>
            <person name="DiChristina T."/>
            <person name="Nealson K.H."/>
            <person name="Newman D."/>
            <person name="Tiedje J.M."/>
            <person name="Zhou J."/>
            <person name="Romine M.F."/>
            <person name="Culley D.E."/>
            <person name="Serres M."/>
            <person name="Chertkov O."/>
            <person name="Brettin T."/>
            <person name="Bruce D."/>
            <person name="Han C."/>
            <person name="Tapia R."/>
            <person name="Gilna P."/>
            <person name="Schmutz J."/>
            <person name="Larimer F."/>
            <person name="Land M."/>
            <person name="Hauser L."/>
            <person name="Kyrpides N."/>
            <person name="Mikhailova N."/>
            <person name="Richardson P."/>
        </authorList>
    </citation>
    <scope>NUCLEOTIDE SEQUENCE [LARGE SCALE GENOMIC DNA]</scope>
    <source>
        <strain>NCIMB 400</strain>
    </source>
</reference>
<feature type="chain" id="PRO_1000017600" description="Large ribosomal subunit protein bL27">
    <location>
        <begin position="1"/>
        <end position="84"/>
    </location>
</feature>
<feature type="region of interest" description="Disordered" evidence="2">
    <location>
        <begin position="1"/>
        <end position="22"/>
    </location>
</feature>
<dbReference type="EMBL" id="CP000447">
    <property type="protein sequence ID" value="ABI72925.1"/>
    <property type="molecule type" value="Genomic_DNA"/>
</dbReference>
<dbReference type="RefSeq" id="WP_011638531.1">
    <property type="nucleotide sequence ID" value="NC_008345.1"/>
</dbReference>
<dbReference type="SMR" id="Q07YI9"/>
<dbReference type="STRING" id="318167.Sfri_3088"/>
<dbReference type="GeneID" id="90571347"/>
<dbReference type="KEGG" id="sfr:Sfri_3088"/>
<dbReference type="eggNOG" id="COG0211">
    <property type="taxonomic scope" value="Bacteria"/>
</dbReference>
<dbReference type="HOGENOM" id="CLU_095424_4_1_6"/>
<dbReference type="OrthoDB" id="9803474at2"/>
<dbReference type="Proteomes" id="UP000000684">
    <property type="component" value="Chromosome"/>
</dbReference>
<dbReference type="GO" id="GO:0022625">
    <property type="term" value="C:cytosolic large ribosomal subunit"/>
    <property type="evidence" value="ECO:0007669"/>
    <property type="project" value="TreeGrafter"/>
</dbReference>
<dbReference type="GO" id="GO:0003735">
    <property type="term" value="F:structural constituent of ribosome"/>
    <property type="evidence" value="ECO:0007669"/>
    <property type="project" value="InterPro"/>
</dbReference>
<dbReference type="GO" id="GO:0006412">
    <property type="term" value="P:translation"/>
    <property type="evidence" value="ECO:0007669"/>
    <property type="project" value="UniProtKB-UniRule"/>
</dbReference>
<dbReference type="FunFam" id="2.40.50.100:FF:000001">
    <property type="entry name" value="50S ribosomal protein L27"/>
    <property type="match status" value="1"/>
</dbReference>
<dbReference type="Gene3D" id="2.40.50.100">
    <property type="match status" value="1"/>
</dbReference>
<dbReference type="HAMAP" id="MF_00539">
    <property type="entry name" value="Ribosomal_bL27"/>
    <property type="match status" value="1"/>
</dbReference>
<dbReference type="InterPro" id="IPR001684">
    <property type="entry name" value="Ribosomal_bL27"/>
</dbReference>
<dbReference type="InterPro" id="IPR018261">
    <property type="entry name" value="Ribosomal_bL27_CS"/>
</dbReference>
<dbReference type="NCBIfam" id="TIGR00062">
    <property type="entry name" value="L27"/>
    <property type="match status" value="1"/>
</dbReference>
<dbReference type="PANTHER" id="PTHR15893:SF0">
    <property type="entry name" value="LARGE RIBOSOMAL SUBUNIT PROTEIN BL27M"/>
    <property type="match status" value="1"/>
</dbReference>
<dbReference type="PANTHER" id="PTHR15893">
    <property type="entry name" value="RIBOSOMAL PROTEIN L27"/>
    <property type="match status" value="1"/>
</dbReference>
<dbReference type="Pfam" id="PF01016">
    <property type="entry name" value="Ribosomal_L27"/>
    <property type="match status" value="1"/>
</dbReference>
<dbReference type="PRINTS" id="PR00063">
    <property type="entry name" value="RIBOSOMALL27"/>
</dbReference>
<dbReference type="SUPFAM" id="SSF110324">
    <property type="entry name" value="Ribosomal L27 protein-like"/>
    <property type="match status" value="1"/>
</dbReference>
<dbReference type="PROSITE" id="PS00831">
    <property type="entry name" value="RIBOSOMAL_L27"/>
    <property type="match status" value="1"/>
</dbReference>
<accession>Q07YI9</accession>
<evidence type="ECO:0000255" key="1">
    <source>
        <dbReference type="HAMAP-Rule" id="MF_00539"/>
    </source>
</evidence>
<evidence type="ECO:0000256" key="2">
    <source>
        <dbReference type="SAM" id="MobiDB-lite"/>
    </source>
</evidence>
<evidence type="ECO:0000305" key="3"/>
<organism>
    <name type="scientific">Shewanella frigidimarina (strain NCIMB 400)</name>
    <dbReference type="NCBI Taxonomy" id="318167"/>
    <lineage>
        <taxon>Bacteria</taxon>
        <taxon>Pseudomonadati</taxon>
        <taxon>Pseudomonadota</taxon>
        <taxon>Gammaproteobacteria</taxon>
        <taxon>Alteromonadales</taxon>
        <taxon>Shewanellaceae</taxon>
        <taxon>Shewanella</taxon>
    </lineage>
</organism>
<gene>
    <name evidence="1" type="primary">rpmA</name>
    <name type="ordered locus">Sfri_3088</name>
</gene>